<dbReference type="EMBL" id="CP000538">
    <property type="protein sequence ID" value="EAQ73444.2"/>
    <property type="status" value="ALT_INIT"/>
    <property type="molecule type" value="Genomic_DNA"/>
</dbReference>
<dbReference type="RefSeq" id="WP_002858743.1">
    <property type="nucleotide sequence ID" value="NC_008787.1"/>
</dbReference>
<dbReference type="PDB" id="5OWV">
    <property type="method" value="X-ray"/>
    <property type="resolution" value="3.72 A"/>
    <property type="chains" value="C/D=1-609"/>
</dbReference>
<dbReference type="PDB" id="5OXF">
    <property type="method" value="X-ray"/>
    <property type="resolution" value="3.94 A"/>
    <property type="chains" value="C/D=1-609"/>
</dbReference>
<dbReference type="PDBsum" id="5OWV"/>
<dbReference type="PDBsum" id="5OXF"/>
<dbReference type="SMR" id="A0A0H3PJK4"/>
<dbReference type="KEGG" id="cjj:CJJ81176_0436"/>
<dbReference type="eggNOG" id="COG0699">
    <property type="taxonomic scope" value="Bacteria"/>
</dbReference>
<dbReference type="HOGENOM" id="CLU_447378_0_0_7"/>
<dbReference type="Proteomes" id="UP000000646">
    <property type="component" value="Chromosome"/>
</dbReference>
<dbReference type="GO" id="GO:0005829">
    <property type="term" value="C:cytosol"/>
    <property type="evidence" value="ECO:0007669"/>
    <property type="project" value="UniProtKB-SubCell"/>
</dbReference>
<dbReference type="GO" id="GO:0016787">
    <property type="term" value="F:hydrolase activity"/>
    <property type="evidence" value="ECO:0007669"/>
    <property type="project" value="UniProtKB-KW"/>
</dbReference>
<dbReference type="CDD" id="cd09912">
    <property type="entry name" value="DLP_2"/>
    <property type="match status" value="1"/>
</dbReference>
<dbReference type="Gene3D" id="3.40.50.300">
    <property type="entry name" value="P-loop containing nucleotide triphosphate hydrolases"/>
    <property type="match status" value="1"/>
</dbReference>
<dbReference type="InterPro" id="IPR022812">
    <property type="entry name" value="Dynamin"/>
</dbReference>
<dbReference type="InterPro" id="IPR045063">
    <property type="entry name" value="Dynamin_N"/>
</dbReference>
<dbReference type="InterPro" id="IPR027417">
    <property type="entry name" value="P-loop_NTPase"/>
</dbReference>
<dbReference type="InterPro" id="IPR051943">
    <property type="entry name" value="TRAFAC_Dynamin-like_GTPase"/>
</dbReference>
<dbReference type="PANTHER" id="PTHR43681:SF1">
    <property type="entry name" value="SARCALUMENIN"/>
    <property type="match status" value="1"/>
</dbReference>
<dbReference type="PANTHER" id="PTHR43681">
    <property type="entry name" value="TRANSMEMBRANE GTPASE FZO"/>
    <property type="match status" value="1"/>
</dbReference>
<dbReference type="Pfam" id="PF00350">
    <property type="entry name" value="Dynamin_N"/>
    <property type="match status" value="1"/>
</dbReference>
<dbReference type="PRINTS" id="PR00195">
    <property type="entry name" value="DYNAMIN"/>
</dbReference>
<dbReference type="SUPFAM" id="SSF52540">
    <property type="entry name" value="P-loop containing nucleoside triphosphate hydrolases"/>
    <property type="match status" value="1"/>
</dbReference>
<sequence length="609" mass="71304">MQINLLNDFIKAYENTYSVSFDDSFKGRIQELCKELNEPFMHASYALENELKELVFSLDKNVNIAIIGQFSSGKSSLLNLILGRDCLPTGVVPVTFKPTFLRYAKEYFLRVEFEDGSDIITNIEKLAFYTDQRNEVKQAKSLHIFAPIPLLEKITLVDTPGLNANENDTLTTLDELKNIHGAIWLSLIDNAGKKSEEDAIKANLELLGENSICVLNQKDKLSAEELDNVLNYAKSVFLKYFNELIAISCKEAKDEQSYEKSNFQSLLDFLTQLDTTVLKEKFVKRKILNLCEILEDENQLFVGIFDRLLNQFQSYEKHLLLAYENFLKEIEILNHQILEQLKSISERISSEIFASVKEKDAYFYKESKGFLKKDLYTRYDYKAPYISSDDAFLAMFYNSDVMSKEFKKIKNELYKSFEEIKMKLKDFINILEREILLFKAEFSNIQKDHIFQSDKNFSELRAFCNASDEYFLKDFKELLFKSILELDLFFEKLNLKAFTNYENATKLSLAFFSRKINESRVLYELDSSEFVLFYPKKSEIYERVLNELNVYEFETLLINKPILTKIAKNFLEQSQNLIQEKNKFLDLKKAELQKRRAQILNVRESIKED</sequence>
<accession>A0A0H3PJK4</accession>
<reference key="1">
    <citation type="submission" date="2006-12" db="EMBL/GenBank/DDBJ databases">
        <authorList>
            <person name="Fouts D.E."/>
            <person name="Nelson K.E."/>
            <person name="Sebastian Y."/>
        </authorList>
    </citation>
    <scope>NUCLEOTIDE SEQUENCE [LARGE SCALE GENOMIC DNA]</scope>
    <source>
        <strain>81-176</strain>
    </source>
</reference>
<reference evidence="5 6" key="2">
    <citation type="journal article" date="2018" name="Nat. Commun.">
        <title>Structural basis for membrane tethering by a bacterial dynamin-like pair.</title>
        <authorList>
            <person name="Liu J."/>
            <person name="Noel J.K."/>
            <person name="Low H.H."/>
        </authorList>
    </citation>
    <scope>X-RAY CRYSTALLOGRAPHY (3.72 ANGSTROMS) WITH AND WITHOUT GDP</scope>
    <scope>CATALYTIC ACTIVITY</scope>
    <scope>SUBUNIT</scope>
    <scope>SUBCELLULAR LOCATION</scope>
    <scope>DOMAIN</scope>
    <scope>DISRUPTION PHENOTYPE</scope>
    <scope>MUTAGENESIS OF LYS-74 AND 530-PHE--PHE-533</scope>
    <source>
        <strain>81-176</strain>
    </source>
</reference>
<gene>
    <name evidence="3" type="primary">dlp2</name>
    <name evidence="3" type="synonym">cj0412</name>
    <name type="ordered locus">CJJ81176_0436</name>
</gene>
<keyword id="KW-0002">3D-structure</keyword>
<keyword id="KW-0963">Cytoplasm</keyword>
<keyword id="KW-0378">Hydrolase</keyword>
<organism>
    <name type="scientific">Campylobacter jejuni subsp. jejuni serotype O:23/36 (strain 81-176)</name>
    <dbReference type="NCBI Taxonomy" id="354242"/>
    <lineage>
        <taxon>Bacteria</taxon>
        <taxon>Pseudomonadati</taxon>
        <taxon>Campylobacterota</taxon>
        <taxon>Epsilonproteobacteria</taxon>
        <taxon>Campylobacterales</taxon>
        <taxon>Campylobacteraceae</taxon>
        <taxon>Campylobacter</taxon>
    </lineage>
</organism>
<proteinExistence type="evidence at protein level"/>
<name>DLP2_CAMJJ</name>
<comment type="function">
    <text evidence="2">The heterotetrameric DLP1(2)-DLP2(2) complex tethers liposomes and may mediate their fusion. Initial binding is probably mediated by DLP1, while DLP2 couples DLP1 subunits and increases the effective reach of the complex up to 45 nm. The role of the nucleotide is unknown. This subunit alone very weakly binds to liposomes; GTP, GDP, GMPPCP and GMPPNP do not change heterotetramer binding. Tetramerization is required for GTPase activity, suggesting the GTPase domains (dynamin-type G) from DLP1 and DLP2 must dimerize to reconstitute the GTPase active site.</text>
</comment>
<comment type="catalytic activity">
    <reaction evidence="2">
        <text>GTP + H2O = GDP + phosphate + H(+)</text>
        <dbReference type="Rhea" id="RHEA:19669"/>
        <dbReference type="ChEBI" id="CHEBI:15377"/>
        <dbReference type="ChEBI" id="CHEBI:15378"/>
        <dbReference type="ChEBI" id="CHEBI:37565"/>
        <dbReference type="ChEBI" id="CHEBI:43474"/>
        <dbReference type="ChEBI" id="CHEBI:58189"/>
    </reaction>
</comment>
<comment type="subunit">
    <text evidence="2">Forms a 2:2 heterotetramer with DLP1. DLP2 forms a central back-to-back dimer flanked on each side by a DLP1 subunit. In the crystal structures the 2 DLP1 subunits are in very different conformations.</text>
</comment>
<comment type="subcellular location">
    <subcellularLocation>
        <location evidence="2">Cytoplasm</location>
        <location evidence="2">Cytosol</location>
    </subcellularLocation>
</comment>
<comment type="domain">
    <text evidence="2">The 9 residue linker permits DLP1 (tethered to DLP2) considerable flexibility; it is long enough to allow the GTPase domains (dynamin-type G) of DLP1 and DLP2 to heterodimerize. Two regions within the tip of the trunk are required for homodimerization; deletion of residues 348-401 and 509-542 prevents DLP2 dimerization, but not formation of a DLP1-DLP2 dimer.</text>
</comment>
<comment type="disruption phenotype">
    <text evidence="2">Double dlp1-dlp2 deletions have no obvious cell division defects, have no flagella (possibly due to loss of expression of flgP) and are non-motile.</text>
</comment>
<comment type="similarity">
    <text evidence="1">Belongs to the TRAFAC class dynamin-like GTPase superfamily. Dynamin/Fzo/YdjA family.</text>
</comment>
<comment type="sequence caution" evidence="4">
    <conflict type="erroneous initiation">
        <sequence resource="EMBL-CDS" id="EAQ73444"/>
    </conflict>
    <text>Truncated N-terminus.</text>
</comment>
<feature type="chain" id="PRO_0000453206" description="Dynamin-like protein 2">
    <location>
        <begin position="1"/>
        <end position="609"/>
    </location>
</feature>
<feature type="domain" description="Dynamin-type G" evidence="1">
    <location>
        <begin position="63"/>
        <end position="310"/>
    </location>
</feature>
<feature type="region of interest" description="Inserts into assembly domain of DLP1, required for tetramerization" evidence="2">
    <location>
        <begin position="1"/>
        <end position="16"/>
    </location>
</feature>
<feature type="region of interest" description="Linker">
    <location>
        <begin position="17"/>
        <end position="25"/>
    </location>
</feature>
<feature type="region of interest" description="G1 motif" evidence="1 4">
    <location>
        <begin position="68"/>
        <end position="75"/>
    </location>
</feature>
<feature type="region of interest" description="G2 motif" evidence="1 4">
    <location>
        <begin position="93"/>
        <end position="95"/>
    </location>
</feature>
<feature type="region of interest" description="G3 motif" evidence="1 4">
    <location>
        <begin position="158"/>
        <end position="161"/>
    </location>
</feature>
<feature type="region of interest" description="G4 motif" evidence="1 4">
    <location>
        <begin position="216"/>
        <end position="219"/>
    </location>
</feature>
<feature type="binding site" evidence="2 6">
    <location>
        <begin position="72"/>
        <end position="76"/>
    </location>
    <ligand>
        <name>GDP</name>
        <dbReference type="ChEBI" id="CHEBI:58189"/>
    </ligand>
</feature>
<feature type="mutagenesis site" description="No GTPase activity." evidence="2">
    <original>K</original>
    <variation>A</variation>
    <location>
        <position position="74"/>
    </location>
</feature>
<feature type="mutagenesis site" description="Loss of liposome-binding." evidence="2">
    <original>FVLF</original>
    <variation>EEEE</variation>
    <location>
        <begin position="530"/>
        <end position="533"/>
    </location>
</feature>
<protein>
    <recommendedName>
        <fullName evidence="3">Dynamin-like protein 2</fullName>
        <shortName evidence="3">DLP2</shortName>
    </recommendedName>
</protein>
<evidence type="ECO:0000255" key="1">
    <source>
        <dbReference type="PROSITE-ProRule" id="PRU01055"/>
    </source>
</evidence>
<evidence type="ECO:0000269" key="2">
    <source>
    </source>
</evidence>
<evidence type="ECO:0000303" key="3">
    <source>
    </source>
</evidence>
<evidence type="ECO:0000305" key="4"/>
<evidence type="ECO:0007744" key="5">
    <source>
        <dbReference type="PDB" id="5OWV"/>
    </source>
</evidence>
<evidence type="ECO:0007744" key="6">
    <source>
        <dbReference type="PDB" id="5OXF"/>
    </source>
</evidence>